<sequence>MTEQQISRTQAWLESLRPKTLPLAFAAIIVGTALAWWQGHFDPLVALLALITAGLLQILSNLANDYGDAVKGSDKPDRIGPLRGMQKGVITQQEMKRALIITVVLICLSGLALVAVACHTLADFVGFLILGGLSIIAAITYTVGNRPYGYIGLGDISVLVFFGWLSVMGSWYLQAHTLIPALILPATACGLLATAVLNINNLRDINSDRENGKNTLVVRLGEVNARRYHACLLMGSLVCLALFNLFSLHSLWGWLFLLAAPLLVKQARYVMREMDPVAMRPMLERTVKGALLTNLLFVLGIFLSQWAA</sequence>
<reference key="1">
    <citation type="journal article" date="1998" name="J. Bacteriol.">
        <title>Menaquinone (vitamin K2) biosynthesis: localization and characterization of the menA gene from Escherichia coli.</title>
        <authorList>
            <person name="Suvarna K."/>
            <person name="Stevenson D."/>
            <person name="Meganathan R."/>
            <person name="Hudspeth M.E.S."/>
        </authorList>
    </citation>
    <scope>NUCLEOTIDE SEQUENCE [GENOMIC DNA]</scope>
    <scope>FUNCTION</scope>
    <scope>CATALYTIC ACTIVITY</scope>
    <scope>PATHWAY</scope>
    <source>
        <strain>K12</strain>
    </source>
</reference>
<reference key="2">
    <citation type="journal article" date="1993" name="Nucleic Acids Res.">
        <title>Analysis of the Escherichia coli genome. III. DNA sequence of the region from 87.2 to 89.2 minutes.</title>
        <authorList>
            <person name="Plunkett G. III"/>
            <person name="Burland V."/>
            <person name="Daniels D.L."/>
            <person name="Blattner F.R."/>
        </authorList>
    </citation>
    <scope>NUCLEOTIDE SEQUENCE [LARGE SCALE GENOMIC DNA]</scope>
    <source>
        <strain>K12 / MG1655 / ATCC 47076</strain>
    </source>
</reference>
<reference key="3">
    <citation type="journal article" date="1997" name="Science">
        <title>The complete genome sequence of Escherichia coli K-12.</title>
        <authorList>
            <person name="Blattner F.R."/>
            <person name="Plunkett G. III"/>
            <person name="Bloch C.A."/>
            <person name="Perna N.T."/>
            <person name="Burland V."/>
            <person name="Riley M."/>
            <person name="Collado-Vides J."/>
            <person name="Glasner J.D."/>
            <person name="Rode C.K."/>
            <person name="Mayhew G.F."/>
            <person name="Gregor J."/>
            <person name="Davis N.W."/>
            <person name="Kirkpatrick H.A."/>
            <person name="Goeden M.A."/>
            <person name="Rose D.J."/>
            <person name="Mau B."/>
            <person name="Shao Y."/>
        </authorList>
    </citation>
    <scope>NUCLEOTIDE SEQUENCE [LARGE SCALE GENOMIC DNA]</scope>
    <source>
        <strain>K12 / MG1655 / ATCC 47076</strain>
    </source>
</reference>
<reference key="4">
    <citation type="journal article" date="2006" name="Mol. Syst. Biol.">
        <title>Highly accurate genome sequences of Escherichia coli K-12 strains MG1655 and W3110.</title>
        <authorList>
            <person name="Hayashi K."/>
            <person name="Morooka N."/>
            <person name="Yamamoto Y."/>
            <person name="Fujita K."/>
            <person name="Isono K."/>
            <person name="Choi S."/>
            <person name="Ohtsubo E."/>
            <person name="Baba T."/>
            <person name="Wanner B.L."/>
            <person name="Mori H."/>
            <person name="Horiuchi T."/>
        </authorList>
    </citation>
    <scope>NUCLEOTIDE SEQUENCE [LARGE SCALE GENOMIC DNA]</scope>
    <source>
        <strain>K12 / W3110 / ATCC 27325 / DSM 5911</strain>
    </source>
</reference>
<reference key="5">
    <citation type="journal article" date="2005" name="Science">
        <title>Global topology analysis of the Escherichia coli inner membrane proteome.</title>
        <authorList>
            <person name="Daley D.O."/>
            <person name="Rapp M."/>
            <person name="Granseth E."/>
            <person name="Melen K."/>
            <person name="Drew D."/>
            <person name="von Heijne G."/>
        </authorList>
    </citation>
    <scope>TOPOLOGY [LARGE SCALE ANALYSIS]</scope>
    <source>
        <strain>K12 / MG1655 / ATCC 47076</strain>
    </source>
</reference>
<dbReference type="EC" id="2.5.1.74" evidence="1 3"/>
<dbReference type="EMBL" id="U56082">
    <property type="protein sequence ID" value="AAB01207.1"/>
    <property type="molecule type" value="Genomic_DNA"/>
</dbReference>
<dbReference type="EMBL" id="L19201">
    <property type="protein sequence ID" value="AAB03062.1"/>
    <property type="molecule type" value="Genomic_DNA"/>
</dbReference>
<dbReference type="EMBL" id="U00096">
    <property type="protein sequence ID" value="AAC76912.1"/>
    <property type="molecule type" value="Genomic_DNA"/>
</dbReference>
<dbReference type="EMBL" id="AP009048">
    <property type="protein sequence ID" value="BAE77380.1"/>
    <property type="molecule type" value="Genomic_DNA"/>
</dbReference>
<dbReference type="PIR" id="S40873">
    <property type="entry name" value="S40873"/>
</dbReference>
<dbReference type="RefSeq" id="NP_418365.1">
    <property type="nucleotide sequence ID" value="NC_000913.3"/>
</dbReference>
<dbReference type="RefSeq" id="WP_000139496.1">
    <property type="nucleotide sequence ID" value="NZ_STEB01000017.1"/>
</dbReference>
<dbReference type="SMR" id="P32166"/>
<dbReference type="BioGRID" id="4261778">
    <property type="interactions" value="7"/>
</dbReference>
<dbReference type="FunCoup" id="P32166">
    <property type="interactions" value="474"/>
</dbReference>
<dbReference type="STRING" id="511145.b3930"/>
<dbReference type="PaxDb" id="511145-b3930"/>
<dbReference type="DNASU" id="948418"/>
<dbReference type="EnsemblBacteria" id="AAC76912">
    <property type="protein sequence ID" value="AAC76912"/>
    <property type="gene ID" value="b3930"/>
</dbReference>
<dbReference type="GeneID" id="75204603"/>
<dbReference type="GeneID" id="948418"/>
<dbReference type="KEGG" id="ecj:JW3901"/>
<dbReference type="KEGG" id="eco:b3930"/>
<dbReference type="KEGG" id="ecoc:C3026_21240"/>
<dbReference type="PATRIC" id="fig|1411691.4.peg.2775"/>
<dbReference type="EchoBASE" id="EB1826"/>
<dbReference type="eggNOG" id="COG1575">
    <property type="taxonomic scope" value="Bacteria"/>
</dbReference>
<dbReference type="HOGENOM" id="CLU_043611_1_1_6"/>
<dbReference type="InParanoid" id="P32166"/>
<dbReference type="OMA" id="QWIEGAR"/>
<dbReference type="OrthoDB" id="9767568at2"/>
<dbReference type="PhylomeDB" id="P32166"/>
<dbReference type="BioCyc" id="EcoCyc:DMK-MONOMER"/>
<dbReference type="BioCyc" id="MetaCyc:DMK-MONOMER"/>
<dbReference type="BRENDA" id="2.5.1.74">
    <property type="organism ID" value="2026"/>
</dbReference>
<dbReference type="UniPathway" id="UPA00079">
    <property type="reaction ID" value="UER00168"/>
</dbReference>
<dbReference type="PRO" id="PR:P32166"/>
<dbReference type="Proteomes" id="UP000000625">
    <property type="component" value="Chromosome"/>
</dbReference>
<dbReference type="GO" id="GO:0016020">
    <property type="term" value="C:membrane"/>
    <property type="evidence" value="ECO:0000314"/>
    <property type="project" value="EcoCyc"/>
</dbReference>
<dbReference type="GO" id="GO:0005886">
    <property type="term" value="C:plasma membrane"/>
    <property type="evidence" value="ECO:0000314"/>
    <property type="project" value="EcoCyc"/>
</dbReference>
<dbReference type="GO" id="GO:0046428">
    <property type="term" value="F:1,4-dihydroxy-2-naphthoate polyprenyltransferase activity"/>
    <property type="evidence" value="ECO:0000314"/>
    <property type="project" value="EcoCyc"/>
</dbReference>
<dbReference type="GO" id="GO:0000287">
    <property type="term" value="F:magnesium ion binding"/>
    <property type="evidence" value="ECO:0000314"/>
    <property type="project" value="EcoCyc"/>
</dbReference>
<dbReference type="GO" id="GO:0004659">
    <property type="term" value="F:prenyltransferase activity"/>
    <property type="evidence" value="ECO:0000318"/>
    <property type="project" value="GO_Central"/>
</dbReference>
<dbReference type="GO" id="GO:0009234">
    <property type="term" value="P:menaquinone biosynthetic process"/>
    <property type="evidence" value="ECO:0000315"/>
    <property type="project" value="EcoCyc"/>
</dbReference>
<dbReference type="GO" id="GO:0042371">
    <property type="term" value="P:vitamin K biosynthetic process"/>
    <property type="evidence" value="ECO:0000318"/>
    <property type="project" value="GO_Central"/>
</dbReference>
<dbReference type="CDD" id="cd13962">
    <property type="entry name" value="PT_UbiA_UBIAD1"/>
    <property type="match status" value="1"/>
</dbReference>
<dbReference type="FunFam" id="1.10.357.140:FF:000016">
    <property type="entry name" value="1,4-dihydroxy-2-naphthoate octaprenyltransferase"/>
    <property type="match status" value="1"/>
</dbReference>
<dbReference type="Gene3D" id="1.10.357.140">
    <property type="entry name" value="UbiA prenyltransferase"/>
    <property type="match status" value="1"/>
</dbReference>
<dbReference type="HAMAP" id="MF_01937">
    <property type="entry name" value="MenA_1"/>
    <property type="match status" value="1"/>
</dbReference>
<dbReference type="InterPro" id="IPR004657">
    <property type="entry name" value="MenA"/>
</dbReference>
<dbReference type="InterPro" id="IPR000537">
    <property type="entry name" value="UbiA_prenyltransferase"/>
</dbReference>
<dbReference type="InterPro" id="IPR044878">
    <property type="entry name" value="UbiA_sf"/>
</dbReference>
<dbReference type="InterPro" id="IPR026046">
    <property type="entry name" value="UBIAD1"/>
</dbReference>
<dbReference type="NCBIfam" id="TIGR00751">
    <property type="entry name" value="menA"/>
    <property type="match status" value="1"/>
</dbReference>
<dbReference type="NCBIfam" id="NF004750">
    <property type="entry name" value="PRK06080.1-2"/>
    <property type="match status" value="1"/>
</dbReference>
<dbReference type="NCBIfam" id="NF004751">
    <property type="entry name" value="PRK06080.1-3"/>
    <property type="match status" value="1"/>
</dbReference>
<dbReference type="NCBIfam" id="NF004754">
    <property type="entry name" value="PRK06080.1-6"/>
    <property type="match status" value="1"/>
</dbReference>
<dbReference type="PANTHER" id="PTHR13929">
    <property type="entry name" value="1,4-DIHYDROXY-2-NAPHTHOATE OCTAPRENYLTRANSFERASE"/>
    <property type="match status" value="1"/>
</dbReference>
<dbReference type="PANTHER" id="PTHR13929:SF0">
    <property type="entry name" value="UBIA PRENYLTRANSFERASE DOMAIN-CONTAINING PROTEIN 1"/>
    <property type="match status" value="1"/>
</dbReference>
<dbReference type="Pfam" id="PF01040">
    <property type="entry name" value="UbiA"/>
    <property type="match status" value="1"/>
</dbReference>
<dbReference type="PIRSF" id="PIRSF005355">
    <property type="entry name" value="UBIAD1"/>
    <property type="match status" value="1"/>
</dbReference>
<name>MENA_ECOLI</name>
<comment type="function">
    <text evidence="3">Conversion of 1,4-dihydroxy-2-naphthoate (DHNA) to demethylmenaquinone (DMK). Attaches octaprenylpyrophosphate, a membrane-bound 40-carbon side chain to DHNA. The conversion of DHNA to DMK proceeds in three stages: the removal of the carboxyl group of DHNA as CO(2), the attachment of the isoprenoid side chain, and a quinol-to-quinone oxidation, which is thought to be spontaneous.</text>
</comment>
<comment type="catalytic activity">
    <reaction evidence="1 3">
        <text>an all-trans-polyprenyl diphosphate + 1,4-dihydroxy-2-naphthoate + H(+) = a 2-demethylmenaquinol + CO2 + diphosphate</text>
        <dbReference type="Rhea" id="RHEA:26478"/>
        <dbReference type="Rhea" id="RHEA-COMP:9563"/>
        <dbReference type="Rhea" id="RHEA-COMP:9564"/>
        <dbReference type="ChEBI" id="CHEBI:11173"/>
        <dbReference type="ChEBI" id="CHEBI:15378"/>
        <dbReference type="ChEBI" id="CHEBI:16526"/>
        <dbReference type="ChEBI" id="CHEBI:33019"/>
        <dbReference type="ChEBI" id="CHEBI:55437"/>
        <dbReference type="ChEBI" id="CHEBI:58914"/>
        <dbReference type="EC" id="2.5.1.74"/>
    </reaction>
</comment>
<comment type="pathway">
    <text evidence="1 3">Quinol/quinone metabolism; menaquinone biosynthesis; menaquinol from 1,4-dihydroxy-2-naphthoate: step 1/2.</text>
</comment>
<comment type="subcellular location">
    <subcellularLocation>
        <location evidence="1 2">Cell inner membrane</location>
        <topology evidence="1 2">Multi-pass membrane protein</topology>
    </subcellularLocation>
</comment>
<comment type="similarity">
    <text evidence="1 5">Belongs to the MenA family. Type 1 subfamily.</text>
</comment>
<evidence type="ECO:0000255" key="1">
    <source>
        <dbReference type="HAMAP-Rule" id="MF_01937"/>
    </source>
</evidence>
<evidence type="ECO:0000269" key="2">
    <source>
    </source>
</evidence>
<evidence type="ECO:0000269" key="3">
    <source>
    </source>
</evidence>
<evidence type="ECO:0000303" key="4">
    <source>
    </source>
</evidence>
<evidence type="ECO:0000305" key="5"/>
<organism>
    <name type="scientific">Escherichia coli (strain K12)</name>
    <dbReference type="NCBI Taxonomy" id="83333"/>
    <lineage>
        <taxon>Bacteria</taxon>
        <taxon>Pseudomonadati</taxon>
        <taxon>Pseudomonadota</taxon>
        <taxon>Gammaproteobacteria</taxon>
        <taxon>Enterobacterales</taxon>
        <taxon>Enterobacteriaceae</taxon>
        <taxon>Escherichia</taxon>
    </lineage>
</organism>
<proteinExistence type="evidence at protein level"/>
<accession>P32166</accession>
<accession>Q2M8M6</accession>
<gene>
    <name evidence="1 4" type="primary">menA</name>
    <name type="synonym">yiiW</name>
    <name type="ordered locus">b3930</name>
    <name type="ordered locus">JW3901</name>
</gene>
<protein>
    <recommendedName>
        <fullName evidence="1">1,4-dihydroxy-2-naphthoate octaprenyltransferase</fullName>
        <shortName evidence="1">DHNA-octaprenyltransferase</shortName>
        <ecNumber evidence="1 3">2.5.1.74</ecNumber>
    </recommendedName>
</protein>
<feature type="chain" id="PRO_0000096414" description="1,4-dihydroxy-2-naphthoate octaprenyltransferase">
    <location>
        <begin position="1"/>
        <end position="308"/>
    </location>
</feature>
<feature type="topological domain" description="Cytoplasmic" evidence="5">
    <location>
        <begin position="1"/>
        <end position="20"/>
    </location>
</feature>
<feature type="transmembrane region" description="Helical" evidence="1">
    <location>
        <begin position="21"/>
        <end position="41"/>
    </location>
</feature>
<feature type="topological domain" description="Periplasmic" evidence="5">
    <location>
        <position position="42"/>
    </location>
</feature>
<feature type="transmembrane region" description="Helical" evidence="1">
    <location>
        <begin position="43"/>
        <end position="63"/>
    </location>
</feature>
<feature type="topological domain" description="Cytoplasmic" evidence="5">
    <location>
        <begin position="64"/>
        <end position="97"/>
    </location>
</feature>
<feature type="transmembrane region" description="Helical" evidence="1">
    <location>
        <begin position="98"/>
        <end position="118"/>
    </location>
</feature>
<feature type="topological domain" description="Periplasmic" evidence="5">
    <location>
        <begin position="119"/>
        <end position="123"/>
    </location>
</feature>
<feature type="transmembrane region" description="Helical" evidence="1">
    <location>
        <begin position="124"/>
        <end position="144"/>
    </location>
</feature>
<feature type="topological domain" description="Cytoplasmic" evidence="5">
    <location>
        <begin position="145"/>
        <end position="148"/>
    </location>
</feature>
<feature type="transmembrane region" description="Helical" evidence="1">
    <location>
        <begin position="149"/>
        <end position="169"/>
    </location>
</feature>
<feature type="topological domain" description="Periplasmic" evidence="5">
    <location>
        <begin position="170"/>
        <end position="176"/>
    </location>
</feature>
<feature type="transmembrane region" description="Helical" evidence="1">
    <location>
        <begin position="177"/>
        <end position="197"/>
    </location>
</feature>
<feature type="topological domain" description="Cytoplasmic" evidence="5">
    <location>
        <begin position="198"/>
        <end position="227"/>
    </location>
</feature>
<feature type="transmembrane region" description="Helical" evidence="1">
    <location>
        <begin position="228"/>
        <end position="247"/>
    </location>
</feature>
<feature type="topological domain" description="Periplasmic" evidence="5">
    <location>
        <begin position="248"/>
        <end position="250"/>
    </location>
</feature>
<feature type="transmembrane region" description="Helical" evidence="1">
    <location>
        <begin position="251"/>
        <end position="270"/>
    </location>
</feature>
<feature type="topological domain" description="Cytoplasmic" evidence="5">
    <location>
        <begin position="271"/>
        <end position="286"/>
    </location>
</feature>
<feature type="transmembrane region" description="Helical" evidence="1">
    <location>
        <begin position="287"/>
        <end position="307"/>
    </location>
</feature>
<feature type="topological domain" description="Periplasmic" evidence="2">
    <location>
        <position position="308"/>
    </location>
</feature>
<keyword id="KW-0997">Cell inner membrane</keyword>
<keyword id="KW-1003">Cell membrane</keyword>
<keyword id="KW-0472">Membrane</keyword>
<keyword id="KW-0474">Menaquinone biosynthesis</keyword>
<keyword id="KW-1185">Reference proteome</keyword>
<keyword id="KW-0808">Transferase</keyword>
<keyword id="KW-0812">Transmembrane</keyword>
<keyword id="KW-1133">Transmembrane helix</keyword>